<protein>
    <recommendedName>
        <fullName evidence="1">ATP phosphoribosyltransferase</fullName>
        <shortName evidence="1">ATP-PRT</shortName>
        <shortName evidence="1">ATP-PRTase</shortName>
        <ecNumber evidence="1">2.4.2.17</ecNumber>
    </recommendedName>
</protein>
<proteinExistence type="inferred from homology"/>
<evidence type="ECO:0000255" key="1">
    <source>
        <dbReference type="HAMAP-Rule" id="MF_01018"/>
    </source>
</evidence>
<comment type="function">
    <text evidence="1">Catalyzes the condensation of ATP and 5-phosphoribose 1-diphosphate to form N'-(5'-phosphoribosyl)-ATP (PR-ATP). Has a crucial role in the pathway because the rate of histidine biosynthesis seems to be controlled primarily by regulation of HisG enzymatic activity.</text>
</comment>
<comment type="catalytic activity">
    <reaction evidence="1">
        <text>1-(5-phospho-beta-D-ribosyl)-ATP + diphosphate = 5-phospho-alpha-D-ribose 1-diphosphate + ATP</text>
        <dbReference type="Rhea" id="RHEA:18473"/>
        <dbReference type="ChEBI" id="CHEBI:30616"/>
        <dbReference type="ChEBI" id="CHEBI:33019"/>
        <dbReference type="ChEBI" id="CHEBI:58017"/>
        <dbReference type="ChEBI" id="CHEBI:73183"/>
        <dbReference type="EC" id="2.4.2.17"/>
    </reaction>
</comment>
<comment type="pathway">
    <text evidence="1">Amino-acid biosynthesis; L-histidine biosynthesis; L-histidine from 5-phospho-alpha-D-ribose 1-diphosphate: step 1/9.</text>
</comment>
<comment type="subunit">
    <text evidence="1">Heteromultimer composed of HisG and HisZ subunits.</text>
</comment>
<comment type="subcellular location">
    <subcellularLocation>
        <location evidence="1">Cytoplasm</location>
    </subcellularLocation>
</comment>
<comment type="domain">
    <text>Lacks the C-terminal regulatory region which is replaced by HisZ.</text>
</comment>
<comment type="similarity">
    <text evidence="1">Belongs to the ATP phosphoribosyltransferase family. Short subfamily.</text>
</comment>
<gene>
    <name evidence="1" type="primary">hisG</name>
    <name type="ordered locus">Tcr_0988</name>
</gene>
<sequence length="208" mass="22894">MADQLTIALSKGRIYKDTLPLLEAANIIPQEDPSKSRKLIIPTNHEHVRLLIVRATDAPTYVAHGAADIGVAGKDVLMEAPSDNLNELLDLQIAKCKLMVAGPKEAKPHGHRLKIATKYIQSAKAYYAQKGQQVDLIKLYGSMEIAPLIDLADKIVDLVDTGNTLKANGLVPEEHIADISSRLIVNEHAYKTKFKQINDIVEKFRSAI</sequence>
<keyword id="KW-0028">Amino-acid biosynthesis</keyword>
<keyword id="KW-0067">ATP-binding</keyword>
<keyword id="KW-0963">Cytoplasm</keyword>
<keyword id="KW-0328">Glycosyltransferase</keyword>
<keyword id="KW-0368">Histidine biosynthesis</keyword>
<keyword id="KW-0547">Nucleotide-binding</keyword>
<keyword id="KW-0808">Transferase</keyword>
<feature type="chain" id="PRO_0000229338" description="ATP phosphoribosyltransferase">
    <location>
        <begin position="1"/>
        <end position="208"/>
    </location>
</feature>
<reference key="1">
    <citation type="journal article" date="2006" name="PLoS Biol.">
        <title>The genome of deep-sea vent chemolithoautotroph Thiomicrospira crunogena XCL-2.</title>
        <authorList>
            <person name="Scott K.M."/>
            <person name="Sievert S.M."/>
            <person name="Abril F.N."/>
            <person name="Ball L.A."/>
            <person name="Barrett C.J."/>
            <person name="Blake R.A."/>
            <person name="Boller A.J."/>
            <person name="Chain P.S.G."/>
            <person name="Clark J.A."/>
            <person name="Davis C.R."/>
            <person name="Detter C."/>
            <person name="Do K.F."/>
            <person name="Dobrinski K.P."/>
            <person name="Faza B.I."/>
            <person name="Fitzpatrick K.A."/>
            <person name="Freyermuth S.K."/>
            <person name="Harmer T.L."/>
            <person name="Hauser L.J."/>
            <person name="Huegler M."/>
            <person name="Kerfeld C.A."/>
            <person name="Klotz M.G."/>
            <person name="Kong W.W."/>
            <person name="Land M."/>
            <person name="Lapidus A."/>
            <person name="Larimer F.W."/>
            <person name="Longo D.L."/>
            <person name="Lucas S."/>
            <person name="Malfatti S.A."/>
            <person name="Massey S.E."/>
            <person name="Martin D.D."/>
            <person name="McCuddin Z."/>
            <person name="Meyer F."/>
            <person name="Moore J.L."/>
            <person name="Ocampo L.H. Jr."/>
            <person name="Paul J.H."/>
            <person name="Paulsen I.T."/>
            <person name="Reep D.K."/>
            <person name="Ren Q."/>
            <person name="Ross R.L."/>
            <person name="Sato P.Y."/>
            <person name="Thomas P."/>
            <person name="Tinkham L.E."/>
            <person name="Zeruth G.T."/>
        </authorList>
    </citation>
    <scope>NUCLEOTIDE SEQUENCE [LARGE SCALE GENOMIC DNA]</scope>
    <source>
        <strain>DSM 25203 / XCL-2</strain>
    </source>
</reference>
<name>HIS1_HYDCU</name>
<dbReference type="EC" id="2.4.2.17" evidence="1"/>
<dbReference type="EMBL" id="CP000109">
    <property type="protein sequence ID" value="ABB41583.1"/>
    <property type="molecule type" value="Genomic_DNA"/>
</dbReference>
<dbReference type="SMR" id="Q31GZ0"/>
<dbReference type="STRING" id="317025.Tcr_0988"/>
<dbReference type="KEGG" id="tcx:Tcr_0988"/>
<dbReference type="eggNOG" id="COG0040">
    <property type="taxonomic scope" value="Bacteria"/>
</dbReference>
<dbReference type="HOGENOM" id="CLU_038115_2_0_6"/>
<dbReference type="OrthoDB" id="9801867at2"/>
<dbReference type="UniPathway" id="UPA00031">
    <property type="reaction ID" value="UER00006"/>
</dbReference>
<dbReference type="GO" id="GO:0005737">
    <property type="term" value="C:cytoplasm"/>
    <property type="evidence" value="ECO:0007669"/>
    <property type="project" value="UniProtKB-SubCell"/>
</dbReference>
<dbReference type="GO" id="GO:0005524">
    <property type="term" value="F:ATP binding"/>
    <property type="evidence" value="ECO:0007669"/>
    <property type="project" value="UniProtKB-KW"/>
</dbReference>
<dbReference type="GO" id="GO:0003879">
    <property type="term" value="F:ATP phosphoribosyltransferase activity"/>
    <property type="evidence" value="ECO:0007669"/>
    <property type="project" value="UniProtKB-UniRule"/>
</dbReference>
<dbReference type="GO" id="GO:0000105">
    <property type="term" value="P:L-histidine biosynthetic process"/>
    <property type="evidence" value="ECO:0007669"/>
    <property type="project" value="UniProtKB-UniRule"/>
</dbReference>
<dbReference type="CDD" id="cd13595">
    <property type="entry name" value="PBP2_HisGs"/>
    <property type="match status" value="1"/>
</dbReference>
<dbReference type="FunFam" id="3.40.190.10:FF:000011">
    <property type="entry name" value="ATP phosphoribosyltransferase"/>
    <property type="match status" value="1"/>
</dbReference>
<dbReference type="Gene3D" id="3.40.190.10">
    <property type="entry name" value="Periplasmic binding protein-like II"/>
    <property type="match status" value="2"/>
</dbReference>
<dbReference type="HAMAP" id="MF_01018">
    <property type="entry name" value="HisG_Short"/>
    <property type="match status" value="1"/>
</dbReference>
<dbReference type="InterPro" id="IPR013820">
    <property type="entry name" value="ATP_PRibTrfase_cat"/>
</dbReference>
<dbReference type="InterPro" id="IPR018198">
    <property type="entry name" value="ATP_PRibTrfase_CS"/>
</dbReference>
<dbReference type="InterPro" id="IPR001348">
    <property type="entry name" value="ATP_PRibTrfase_HisG"/>
</dbReference>
<dbReference type="InterPro" id="IPR024893">
    <property type="entry name" value="ATP_PRibTrfase_HisG_short"/>
</dbReference>
<dbReference type="NCBIfam" id="TIGR00070">
    <property type="entry name" value="hisG"/>
    <property type="match status" value="1"/>
</dbReference>
<dbReference type="PANTHER" id="PTHR21403:SF8">
    <property type="entry name" value="ATP PHOSPHORIBOSYLTRANSFERASE"/>
    <property type="match status" value="1"/>
</dbReference>
<dbReference type="PANTHER" id="PTHR21403">
    <property type="entry name" value="ATP PHOSPHORIBOSYLTRANSFERASE ATP-PRTASE"/>
    <property type="match status" value="1"/>
</dbReference>
<dbReference type="Pfam" id="PF01634">
    <property type="entry name" value="HisG"/>
    <property type="match status" value="1"/>
</dbReference>
<dbReference type="SUPFAM" id="SSF53850">
    <property type="entry name" value="Periplasmic binding protein-like II"/>
    <property type="match status" value="1"/>
</dbReference>
<dbReference type="PROSITE" id="PS01316">
    <property type="entry name" value="ATP_P_PHORIBOSYLTR"/>
    <property type="match status" value="1"/>
</dbReference>
<organism>
    <name type="scientific">Hydrogenovibrio crunogenus (strain DSM 25203 / XCL-2)</name>
    <name type="common">Thiomicrospira crunogena</name>
    <dbReference type="NCBI Taxonomy" id="317025"/>
    <lineage>
        <taxon>Bacteria</taxon>
        <taxon>Pseudomonadati</taxon>
        <taxon>Pseudomonadota</taxon>
        <taxon>Gammaproteobacteria</taxon>
        <taxon>Thiotrichales</taxon>
        <taxon>Piscirickettsiaceae</taxon>
        <taxon>Hydrogenovibrio</taxon>
    </lineage>
</organism>
<accession>Q31GZ0</accession>